<protein>
    <recommendedName>
        <fullName evidence="1">Small ribosomal subunit protein uS2</fullName>
    </recommendedName>
    <alternativeName>
        <fullName evidence="2">40S ribosomal protein SA</fullName>
    </alternativeName>
</protein>
<proteinExistence type="inferred from homology"/>
<evidence type="ECO:0000255" key="1">
    <source>
        <dbReference type="HAMAP-Rule" id="MF_03015"/>
    </source>
</evidence>
<evidence type="ECO:0000305" key="2"/>
<accession>A4HQ28</accession>
<keyword id="KW-0963">Cytoplasm</keyword>
<keyword id="KW-1185">Reference proteome</keyword>
<keyword id="KW-0687">Ribonucleoprotein</keyword>
<keyword id="KW-0689">Ribosomal protein</keyword>
<dbReference type="EMBL" id="FR799010">
    <property type="protein sequence ID" value="CAM44289.1"/>
    <property type="molecule type" value="Genomic_DNA"/>
</dbReference>
<dbReference type="RefSeq" id="XP_001569153.1">
    <property type="nucleotide sequence ID" value="XM_001569103.1"/>
</dbReference>
<dbReference type="SMR" id="A4HQ28"/>
<dbReference type="FunCoup" id="A4HQ28">
    <property type="interactions" value="348"/>
</dbReference>
<dbReference type="STRING" id="5660.A4HQ28"/>
<dbReference type="GeneID" id="5420132"/>
<dbReference type="KEGG" id="lbz:LBRM_35_5370"/>
<dbReference type="VEuPathDB" id="TriTrypDB:LbrM.35.5370"/>
<dbReference type="InParanoid" id="A4HQ28"/>
<dbReference type="OMA" id="VKNFFEP"/>
<dbReference type="Proteomes" id="UP000007258">
    <property type="component" value="Chromosome 36"/>
</dbReference>
<dbReference type="GO" id="GO:0022627">
    <property type="term" value="C:cytosolic small ribosomal subunit"/>
    <property type="evidence" value="ECO:0007669"/>
    <property type="project" value="UniProtKB-UniRule"/>
</dbReference>
<dbReference type="GO" id="GO:0003735">
    <property type="term" value="F:structural constituent of ribosome"/>
    <property type="evidence" value="ECO:0007669"/>
    <property type="project" value="UniProtKB-UniRule"/>
</dbReference>
<dbReference type="GO" id="GO:0000028">
    <property type="term" value="P:ribosomal small subunit assembly"/>
    <property type="evidence" value="ECO:0007669"/>
    <property type="project" value="UniProtKB-UniRule"/>
</dbReference>
<dbReference type="GO" id="GO:0006412">
    <property type="term" value="P:translation"/>
    <property type="evidence" value="ECO:0007669"/>
    <property type="project" value="UniProtKB-UniRule"/>
</dbReference>
<dbReference type="CDD" id="cd01425">
    <property type="entry name" value="RPS2"/>
    <property type="match status" value="1"/>
</dbReference>
<dbReference type="FunFam" id="3.40.50.10490:FF:000012">
    <property type="entry name" value="40S ribosomal protein SA"/>
    <property type="match status" value="1"/>
</dbReference>
<dbReference type="Gene3D" id="3.40.50.10490">
    <property type="entry name" value="Glucose-6-phosphate isomerase like protein, domain 1"/>
    <property type="match status" value="1"/>
</dbReference>
<dbReference type="HAMAP" id="MF_03015">
    <property type="entry name" value="Ribosomal_S2_euk"/>
    <property type="match status" value="1"/>
</dbReference>
<dbReference type="InterPro" id="IPR001865">
    <property type="entry name" value="Ribosomal_uS2"/>
</dbReference>
<dbReference type="InterPro" id="IPR018130">
    <property type="entry name" value="Ribosomal_uS2_CS"/>
</dbReference>
<dbReference type="InterPro" id="IPR027498">
    <property type="entry name" value="Ribosomal_uS2_euk"/>
</dbReference>
<dbReference type="InterPro" id="IPR005707">
    <property type="entry name" value="Ribosomal_uS2_euk/arc"/>
</dbReference>
<dbReference type="InterPro" id="IPR023591">
    <property type="entry name" value="Ribosomal_uS2_flav_dom_sf"/>
</dbReference>
<dbReference type="NCBIfam" id="TIGR01012">
    <property type="entry name" value="uS2_euk_arch"/>
    <property type="match status" value="1"/>
</dbReference>
<dbReference type="PANTHER" id="PTHR11489">
    <property type="entry name" value="40S RIBOSOMAL PROTEIN SA"/>
    <property type="match status" value="1"/>
</dbReference>
<dbReference type="Pfam" id="PF00318">
    <property type="entry name" value="Ribosomal_S2"/>
    <property type="match status" value="1"/>
</dbReference>
<dbReference type="PRINTS" id="PR00395">
    <property type="entry name" value="RIBOSOMALS2"/>
</dbReference>
<dbReference type="SUPFAM" id="SSF52313">
    <property type="entry name" value="Ribosomal protein S2"/>
    <property type="match status" value="1"/>
</dbReference>
<dbReference type="PROSITE" id="PS00963">
    <property type="entry name" value="RIBOSOMAL_S2_2"/>
    <property type="match status" value="1"/>
</dbReference>
<sequence>MTAVESGSKVLRMKESDAQKLLAMRCHIGTRNQSSAMKKYIYGRTAEGSHIIDVHMLWEKLILAARVIAAVENPKDVCVCSSRLYGTRAIYKFSQHVGTSFHGGRFIPGTFTNQIQKKFMQPRVLVVTDPRTDHQAIREASLVNIPVIALCDTDAPLDFVDIAIPCNNRGIKSIGMMYWLLAREVLRLRGTIVRSVPWEEKVDLFFYRDPNEAAEEKAAAAAAAPAAEVEEGFGWVERNDDNAWEA</sequence>
<name>RSSA_LEIBR</name>
<feature type="chain" id="PRO_0000371614" description="Small ribosomal subunit protein uS2">
    <location>
        <begin position="1"/>
        <end position="246"/>
    </location>
</feature>
<gene>
    <name type="ORF">LbrM35_V2.5370</name>
    <name type="ORF">LbrM_35_5370</name>
</gene>
<reference key="1">
    <citation type="journal article" date="2007" name="Nat. Genet.">
        <title>Comparative genomic analysis of three Leishmania species that cause diverse human disease.</title>
        <authorList>
            <person name="Peacock C.S."/>
            <person name="Seeger K."/>
            <person name="Harris D."/>
            <person name="Murphy L."/>
            <person name="Ruiz J.C."/>
            <person name="Quail M.A."/>
            <person name="Peters N."/>
            <person name="Adlem E."/>
            <person name="Tivey A."/>
            <person name="Aslett M."/>
            <person name="Kerhornou A."/>
            <person name="Ivens A."/>
            <person name="Fraser A."/>
            <person name="Rajandream M.-A."/>
            <person name="Carver T."/>
            <person name="Norbertczak H."/>
            <person name="Chillingworth T."/>
            <person name="Hance Z."/>
            <person name="Jagels K."/>
            <person name="Moule S."/>
            <person name="Ormond D."/>
            <person name="Rutter S."/>
            <person name="Sqaures R."/>
            <person name="Whitehead S."/>
            <person name="Rabbinowitsch E."/>
            <person name="Arrowsmith C."/>
            <person name="White B."/>
            <person name="Thurston S."/>
            <person name="Bringaud F."/>
            <person name="Baldauf S.L."/>
            <person name="Faulconbridge A."/>
            <person name="Jeffares D."/>
            <person name="Depledge D.P."/>
            <person name="Oyola S.O."/>
            <person name="Hilley J.D."/>
            <person name="Brito L.O."/>
            <person name="Tosi L.R.O."/>
            <person name="Barrell B."/>
            <person name="Cruz A.K."/>
            <person name="Mottram J.C."/>
            <person name="Smith D.F."/>
            <person name="Berriman M."/>
        </authorList>
    </citation>
    <scope>NUCLEOTIDE SEQUENCE [LARGE SCALE GENOMIC DNA]</scope>
    <source>
        <strain>MHOM/BR/75/M2904</strain>
    </source>
</reference>
<comment type="function">
    <text evidence="1">Required for the assembly and/or stability of the 40S ribosomal subunit. Required for the processing of the 20S rRNA-precursor to mature 18S rRNA in a late step of the maturation of 40S ribosomal subunits.</text>
</comment>
<comment type="subunit">
    <text evidence="1">Component of the small ribosomal subunit. Mature ribosomes consist of a small (40S) and a large (60S) subunit. The 40S subunit contains about 33 different proteins and 1 molecule of RNA (18S). The 60S subunit contains about 49 different proteins and 3 molecules of RNA (25S, 5.8S and 5S). Interacts with ribosomal protein S21.</text>
</comment>
<comment type="subcellular location">
    <subcellularLocation>
        <location evidence="1">Cytoplasm</location>
    </subcellularLocation>
</comment>
<comment type="similarity">
    <text evidence="1">Belongs to the universal ribosomal protein uS2 family.</text>
</comment>
<organism>
    <name type="scientific">Leishmania braziliensis</name>
    <dbReference type="NCBI Taxonomy" id="5660"/>
    <lineage>
        <taxon>Eukaryota</taxon>
        <taxon>Discoba</taxon>
        <taxon>Euglenozoa</taxon>
        <taxon>Kinetoplastea</taxon>
        <taxon>Metakinetoplastina</taxon>
        <taxon>Trypanosomatida</taxon>
        <taxon>Trypanosomatidae</taxon>
        <taxon>Leishmaniinae</taxon>
        <taxon>Leishmania</taxon>
        <taxon>Leishmania braziliensis species complex</taxon>
    </lineage>
</organism>